<keyword id="KW-0903">Direct protein sequencing</keyword>
<keyword id="KW-0328">Glycosyltransferase</keyword>
<keyword id="KW-0520">NAD</keyword>
<keyword id="KW-0548">Nucleotidyltransferase</keyword>
<keyword id="KW-0732">Signal</keyword>
<keyword id="KW-0808">Transferase</keyword>
<name>EDIN_STAAU</name>
<dbReference type="EC" id="2.4.2.-"/>
<dbReference type="EMBL" id="M63917">
    <property type="protein sequence ID" value="AAA26616.1"/>
    <property type="molecule type" value="Genomic_DNA"/>
</dbReference>
<dbReference type="PIR" id="JG0016">
    <property type="entry name" value="JG0016"/>
</dbReference>
<dbReference type="RefSeq" id="WP_012211137.1">
    <property type="nucleotide sequence ID" value="NZ_VRTF01000045.1"/>
</dbReference>
<dbReference type="RefSeq" id="YP_001573884.1">
    <property type="nucleotide sequence ID" value="NC_010077.1"/>
</dbReference>
<dbReference type="RefSeq" id="YP_006937916.1">
    <property type="nucleotide sequence ID" value="NC_013326.1"/>
</dbReference>
<dbReference type="RefSeq" id="YP_006938649.1">
    <property type="nucleotide sequence ID" value="NC_013348.1"/>
</dbReference>
<dbReference type="RefSeq" id="YP_006939339.1">
    <property type="nucleotide sequence ID" value="NC_018952.1"/>
</dbReference>
<dbReference type="SMR" id="P24121"/>
<dbReference type="GO" id="GO:0005576">
    <property type="term" value="C:extracellular region"/>
    <property type="evidence" value="ECO:0007669"/>
    <property type="project" value="InterPro"/>
</dbReference>
<dbReference type="GO" id="GO:1990404">
    <property type="term" value="F:NAD+-protein mono-ADP-ribosyltransferase activity"/>
    <property type="evidence" value="ECO:0007669"/>
    <property type="project" value="InterPro"/>
</dbReference>
<dbReference type="GO" id="GO:0016779">
    <property type="term" value="F:nucleotidyltransferase activity"/>
    <property type="evidence" value="ECO:0007669"/>
    <property type="project" value="UniProtKB-KW"/>
</dbReference>
<dbReference type="CDD" id="cd00233">
    <property type="entry name" value="VIP2"/>
    <property type="match status" value="1"/>
</dbReference>
<dbReference type="Gene3D" id="3.90.176.10">
    <property type="entry name" value="Toxin ADP-ribosyltransferase, Chain A, domain 1"/>
    <property type="match status" value="1"/>
</dbReference>
<dbReference type="InterPro" id="IPR003540">
    <property type="entry name" value="ADP-ribosyltransferase"/>
</dbReference>
<dbReference type="InterPro" id="IPR016678">
    <property type="entry name" value="Mono-ADP_RibTrfase_C3/Edin"/>
</dbReference>
<dbReference type="Pfam" id="PF03496">
    <property type="entry name" value="ADPrib_exo_Tox"/>
    <property type="match status" value="1"/>
</dbReference>
<dbReference type="PIRSF" id="PIRSF016951">
    <property type="entry name" value="MADP_ribosyltransf_Edin"/>
    <property type="match status" value="1"/>
</dbReference>
<dbReference type="SUPFAM" id="SSF56399">
    <property type="entry name" value="ADP-ribosylation"/>
    <property type="match status" value="1"/>
</dbReference>
<dbReference type="PROSITE" id="PS51996">
    <property type="entry name" value="TR_MART"/>
    <property type="match status" value="1"/>
</dbReference>
<comment type="function">
    <text>Inhibits terminal differentiation of cultured mouse keratinocytes. In culture, also inhibits the differentiation of human keratinocytes. Probable ADP-ribosyltransferase.</text>
</comment>
<comment type="similarity">
    <text evidence="4">To ADP-ribosyltransferase C3 of Clostridium.</text>
</comment>
<protein>
    <recommendedName>
        <fullName>Epidermal cell differentiation inhibitor</fullName>
        <shortName>EDIN</shortName>
        <ecNumber>2.4.2.-</ecNumber>
    </recommendedName>
</protein>
<proteinExistence type="evidence at protein level"/>
<sequence>MKNKLLFKIFLSLSLALSVYSINDKIIEVSNTSLAADVKNFTDLDEATKWGNKLIKQAKYSSDDKIALYEYTKDSSKINGPLRLAGGDINKLDSTTQDKVRRLDSSISKSTTPESVYVYRLLNLDYLTSIVGFTNEDLYKLQQTNNGQYDENLVRKLNNVMNSRIYREDGYSSTQLVSGAAVGGRPIELRLELPKGTKAAYLNSKDLTAYYGQQEVLLPRGTEYAVGSVELSNDKKKIIITAIVFKK</sequence>
<evidence type="ECO:0000255" key="1">
    <source>
        <dbReference type="PROSITE-ProRule" id="PRU01340"/>
    </source>
</evidence>
<evidence type="ECO:0000269" key="2">
    <source>
    </source>
</evidence>
<evidence type="ECO:0000269" key="3">
    <source>
    </source>
</evidence>
<evidence type="ECO:0000305" key="4"/>
<feature type="signal peptide" evidence="2 3">
    <location>
        <begin position="1"/>
        <end position="35"/>
    </location>
</feature>
<feature type="chain" id="PRO_0000021149" description="Epidermal cell differentiation inhibitor">
    <location>
        <begin position="36"/>
        <end position="247"/>
    </location>
</feature>
<feature type="domain" description="TR mART core" evidence="1">
    <location>
        <begin position="39"/>
        <end position="247"/>
    </location>
</feature>
<feature type="active site" evidence="1">
    <location>
        <position position="120"/>
    </location>
</feature>
<feature type="active site" evidence="1">
    <location>
        <position position="173"/>
    </location>
</feature>
<feature type="active site" evidence="1">
    <location>
        <position position="215"/>
    </location>
</feature>
<reference key="1">
    <citation type="journal article" date="1991" name="Biochem. Biophys. Res. Commun.">
        <title>Molecular cloning and sequencing of the epidermal cell differentiation inhibitor gene from Staphylococcus aureus.</title>
        <authorList>
            <person name="Inoue S."/>
            <person name="Sugai M."/>
            <person name="Murooka Y."/>
            <person name="Paik S.-Y."/>
            <person name="Hong Y.-M."/>
            <person name="Ohgai H."/>
            <person name="Suginaka H."/>
        </authorList>
    </citation>
    <scope>NUCLEOTIDE SEQUENCE [GENOMIC DNA]</scope>
    <scope>PROTEIN SEQUENCE OF 36-58</scope>
    <source>
        <strain>E-1</strain>
    </source>
</reference>
<reference key="2">
    <citation type="journal article" date="1990" name="Biochem. Biophys. Res. Commun.">
        <title>A novel epidermal cell differentiation inhibitor (EDIN): purification and characterization from Staphylococcus aureus.</title>
        <authorList>
            <person name="Sugai M."/>
            <person name="Enomoto T."/>
            <person name="Hashimoto K."/>
            <person name="Matsumoto K."/>
            <person name="Matsuo Y."/>
            <person name="Ohgai H."/>
            <person name="Hong Y.M."/>
            <person name="Inoue S."/>
            <person name="Yoshikawa K."/>
            <person name="Suginaka H."/>
        </authorList>
    </citation>
    <scope>PROTEIN SEQUENCE OF 36-44</scope>
</reference>
<organism>
    <name type="scientific">Staphylococcus aureus</name>
    <dbReference type="NCBI Taxonomy" id="1280"/>
    <lineage>
        <taxon>Bacteria</taxon>
        <taxon>Bacillati</taxon>
        <taxon>Bacillota</taxon>
        <taxon>Bacilli</taxon>
        <taxon>Bacillales</taxon>
        <taxon>Staphylococcaceae</taxon>
        <taxon>Staphylococcus</taxon>
    </lineage>
</organism>
<accession>P24121</accession>